<organism>
    <name type="scientific">Xenopus tropicalis</name>
    <name type="common">Western clawed frog</name>
    <name type="synonym">Silurana tropicalis</name>
    <dbReference type="NCBI Taxonomy" id="8364"/>
    <lineage>
        <taxon>Eukaryota</taxon>
        <taxon>Metazoa</taxon>
        <taxon>Chordata</taxon>
        <taxon>Craniata</taxon>
        <taxon>Vertebrata</taxon>
        <taxon>Euteleostomi</taxon>
        <taxon>Amphibia</taxon>
        <taxon>Batrachia</taxon>
        <taxon>Anura</taxon>
        <taxon>Pipoidea</taxon>
        <taxon>Pipidae</taxon>
        <taxon>Xenopodinae</taxon>
        <taxon>Xenopus</taxon>
        <taxon>Silurana</taxon>
    </lineage>
</organism>
<accession>Q28DG8</accession>
<protein>
    <recommendedName>
        <fullName>THO complex subunit 5 homolog</fullName>
    </recommendedName>
</protein>
<gene>
    <name type="primary">thoc5</name>
    <name type="ORF">TEgg015p03.1</name>
</gene>
<name>THOC5_XENTR</name>
<evidence type="ECO:0000250" key="1"/>
<evidence type="ECO:0000250" key="2">
    <source>
        <dbReference type="UniProtKB" id="Q13769"/>
    </source>
</evidence>
<evidence type="ECO:0000250" key="3">
    <source>
        <dbReference type="UniProtKB" id="Q6DFL5"/>
    </source>
</evidence>
<evidence type="ECO:0000256" key="4">
    <source>
        <dbReference type="SAM" id="MobiDB-lite"/>
    </source>
</evidence>
<evidence type="ECO:0000305" key="5"/>
<feature type="chain" id="PRO_0000310561" description="THO complex subunit 5 homolog">
    <location>
        <begin position="1"/>
        <end position="678"/>
    </location>
</feature>
<feature type="region of interest" description="Disordered" evidence="4">
    <location>
        <begin position="1"/>
        <end position="37"/>
    </location>
</feature>
<feature type="region of interest" description="Disordered" evidence="4">
    <location>
        <begin position="294"/>
        <end position="329"/>
    </location>
</feature>
<feature type="short sequence motif" description="Nuclear localization signal" evidence="1">
    <location>
        <begin position="7"/>
        <end position="10"/>
    </location>
</feature>
<feature type="compositionally biased region" description="Basic and acidic residues" evidence="4">
    <location>
        <begin position="14"/>
        <end position="37"/>
    </location>
</feature>
<feature type="compositionally biased region" description="Acidic residues" evidence="4">
    <location>
        <begin position="301"/>
        <end position="314"/>
    </location>
</feature>
<reference key="1">
    <citation type="submission" date="2006-10" db="EMBL/GenBank/DDBJ databases">
        <authorList>
            <consortium name="Sanger Xenopus tropicalis EST/cDNA project"/>
        </authorList>
    </citation>
    <scope>NUCLEOTIDE SEQUENCE [LARGE SCALE MRNA]</scope>
    <source>
        <tissue>Egg</tissue>
    </source>
</reference>
<proteinExistence type="evidence at transcript level"/>
<comment type="function">
    <text evidence="2">Component of the THO subcomplex of the TREX complex which is thought to couple mRNA transcription, processing and nuclear export, and which specifically associates with spliced mRNA and not with unspliced pre-mRNA. Plays a key structural role in the oligomerization of the THO-ddx39b complex. TREX is recruited to spliced mRNAs by a transcription-independent mechanism, binds to mRNA upstream of the exon-junction complex (EJC) and is recruited in a splicing- and cap-dependent manner to a region near the 5' end of the mRNA where it functions in mRNA export to the cytoplasm via the TAP/NXF1 pathway. May be involved in cell differentiation.</text>
</comment>
<comment type="subunit">
    <text evidence="2 3">Component of the THO subcomplex, which is composed of thoc1, thoc2, thoc3, thoc5, thoc6 and thoc7 (By similarity). Component of the transcription/export (TREX) complex at least composed of alyref/thoc4, ddx39b, sarnp/cip29, chtop and the THO subcomplex (By similarity). Interacts with thoc7 (By similarity).</text>
</comment>
<comment type="subcellular location">
    <subcellularLocation>
        <location evidence="1">Nucleus</location>
    </subcellularLocation>
    <subcellularLocation>
        <location evidence="1">Nucleus speckle</location>
    </subcellularLocation>
    <subcellularLocation>
        <location evidence="1">Cytoplasm</location>
    </subcellularLocation>
    <text evidence="1">Shuttles between nucleus and cytoplasm.</text>
</comment>
<comment type="similarity">
    <text evidence="5">Belongs to the THOC5 family.</text>
</comment>
<sequence>MSSDSLKKRKPKVNRNEDGKRGRHDEQEGRYYSEEAEVDVRDPREDYQLYKDTCLDLQRLMSEIQDLKNKGGKDSAMEIEEKKVQSCVHFMTLKKLNRLAHIRLKKARDQTHEAKQKVDAYHLQLQNLLYEVMHLQKEITKCLEFKSKHEEIELVSVEEFYSEAPATISKPEITSTDSHQQTLSRLDWELEQRKRLAEKYKECLASKEKILKEIEIKKEYLNSLQPQLNSIMQASLPVQEYLSMPFDCMHKQYETARHLPPPLYVLFVQASAYSQACDRKLVVTIEGNVEEARALFKPPEDSQDDESDSDAEEEQTTKRRRPTLGVQLDDKRKEMLKRHPLCVTLTLKCKEGSTLNLTFYFLMNLNILTVKVKIQPALELSTAISAGDLLNPDLILSCLYQGDDGKTTPNPANRYQFDKIGILSLNDYISELGHPYIWVQTMGGLHFPTDQPQPAVIADNALSASHMEKTINLLRARLLSRLSLHRQFASLEHGSIPVSLECQTLFPAKVISRLTKWNVITYEDYLALPYTKDVIECGLAKETDQYFYLLIERGTAKLNGVVVLNPGYCAVPPVFSLCLNWKGERSSSNDDNIRVMESEVNVYFKELCGPPPGFQLLTNQIQRLCMLLDVYLETERHDNSVEGPHEFPPEKICLRLLRGPSRTKPFKYNYPQGFFSHR</sequence>
<dbReference type="EMBL" id="CR855522">
    <property type="protein sequence ID" value="CAJ82162.1"/>
    <property type="molecule type" value="mRNA"/>
</dbReference>
<dbReference type="RefSeq" id="NP_001016827.1">
    <property type="nucleotide sequence ID" value="NM_001016827.2"/>
</dbReference>
<dbReference type="SMR" id="Q28DG8"/>
<dbReference type="FunCoup" id="Q28DG8">
    <property type="interactions" value="2763"/>
</dbReference>
<dbReference type="STRING" id="8364.ENSXETP00000026644"/>
<dbReference type="PaxDb" id="8364-ENSXETP00000035835"/>
<dbReference type="GeneID" id="549581"/>
<dbReference type="KEGG" id="xtr:549581"/>
<dbReference type="AGR" id="Xenbase:XB-GENE-1015168"/>
<dbReference type="CTD" id="8563"/>
<dbReference type="Xenbase" id="XB-GENE-1015168">
    <property type="gene designation" value="thoc5"/>
</dbReference>
<dbReference type="eggNOG" id="KOG2216">
    <property type="taxonomic scope" value="Eukaryota"/>
</dbReference>
<dbReference type="HOGENOM" id="CLU_023759_0_0_1"/>
<dbReference type="InParanoid" id="Q28DG8"/>
<dbReference type="OrthoDB" id="20582at2759"/>
<dbReference type="Proteomes" id="UP000008143">
    <property type="component" value="Chromosome 1"/>
</dbReference>
<dbReference type="GO" id="GO:0005737">
    <property type="term" value="C:cytoplasm"/>
    <property type="evidence" value="ECO:0007669"/>
    <property type="project" value="UniProtKB-SubCell"/>
</dbReference>
<dbReference type="GO" id="GO:0016607">
    <property type="term" value="C:nuclear speck"/>
    <property type="evidence" value="ECO:0007669"/>
    <property type="project" value="UniProtKB-SubCell"/>
</dbReference>
<dbReference type="GO" id="GO:0003723">
    <property type="term" value="F:RNA binding"/>
    <property type="evidence" value="ECO:0007669"/>
    <property type="project" value="UniProtKB-KW"/>
</dbReference>
<dbReference type="GO" id="GO:0030154">
    <property type="term" value="P:cell differentiation"/>
    <property type="evidence" value="ECO:0007669"/>
    <property type="project" value="UniProtKB-KW"/>
</dbReference>
<dbReference type="GO" id="GO:0006397">
    <property type="term" value="P:mRNA processing"/>
    <property type="evidence" value="ECO:0007669"/>
    <property type="project" value="UniProtKB-KW"/>
</dbReference>
<dbReference type="GO" id="GO:0051028">
    <property type="term" value="P:mRNA transport"/>
    <property type="evidence" value="ECO:0007669"/>
    <property type="project" value="UniProtKB-KW"/>
</dbReference>
<dbReference type="GO" id="GO:0008380">
    <property type="term" value="P:RNA splicing"/>
    <property type="evidence" value="ECO:0007669"/>
    <property type="project" value="UniProtKB-KW"/>
</dbReference>
<dbReference type="InterPro" id="IPR019163">
    <property type="entry name" value="THO_Thoc5"/>
</dbReference>
<dbReference type="PANTHER" id="PTHR13375">
    <property type="entry name" value="FMS INTERACTING PROTEIN"/>
    <property type="match status" value="1"/>
</dbReference>
<dbReference type="PANTHER" id="PTHR13375:SF3">
    <property type="entry name" value="THO COMPLEX SUBUNIT 5 HOMOLOG"/>
    <property type="match status" value="1"/>
</dbReference>
<dbReference type="Pfam" id="PF09766">
    <property type="entry name" value="FmiP_Thoc5"/>
    <property type="match status" value="1"/>
</dbReference>
<keyword id="KW-0963">Cytoplasm</keyword>
<keyword id="KW-0221">Differentiation</keyword>
<keyword id="KW-0507">mRNA processing</keyword>
<keyword id="KW-0508">mRNA splicing</keyword>
<keyword id="KW-0509">mRNA transport</keyword>
<keyword id="KW-0539">Nucleus</keyword>
<keyword id="KW-1185">Reference proteome</keyword>
<keyword id="KW-0694">RNA-binding</keyword>
<keyword id="KW-0813">Transport</keyword>